<organism>
    <name type="scientific">Synechococcus sp. (strain CC9902)</name>
    <dbReference type="NCBI Taxonomy" id="316279"/>
    <lineage>
        <taxon>Bacteria</taxon>
        <taxon>Bacillati</taxon>
        <taxon>Cyanobacteriota</taxon>
        <taxon>Cyanophyceae</taxon>
        <taxon>Synechococcales</taxon>
        <taxon>Synechococcaceae</taxon>
        <taxon>Synechococcus</taxon>
    </lineage>
</organism>
<keyword id="KW-1185">Reference proteome</keyword>
<feature type="chain" id="PRO_0000240505" description="UPF0367 protein Syncc9902_0316">
    <location>
        <begin position="1"/>
        <end position="87"/>
    </location>
</feature>
<proteinExistence type="inferred from homology"/>
<reference key="1">
    <citation type="submission" date="2005-08" db="EMBL/GenBank/DDBJ databases">
        <title>Complete sequence of Synechococcus sp. CC9902.</title>
        <authorList>
            <person name="Copeland A."/>
            <person name="Lucas S."/>
            <person name="Lapidus A."/>
            <person name="Barry K."/>
            <person name="Detter J.C."/>
            <person name="Glavina T."/>
            <person name="Hammon N."/>
            <person name="Israni S."/>
            <person name="Pitluck S."/>
            <person name="Martinez M."/>
            <person name="Schmutz J."/>
            <person name="Larimer F."/>
            <person name="Land M."/>
            <person name="Kyrpides N."/>
            <person name="Ivanova N."/>
            <person name="Richardson P."/>
        </authorList>
    </citation>
    <scope>NUCLEOTIDE SEQUENCE [LARGE SCALE GENOMIC DNA]</scope>
    <source>
        <strain>CC9902</strain>
    </source>
</reference>
<comment type="similarity">
    <text evidence="1">Belongs to the UPF0367 family.</text>
</comment>
<evidence type="ECO:0000255" key="1">
    <source>
        <dbReference type="HAMAP-Rule" id="MF_01360"/>
    </source>
</evidence>
<name>Y316_SYNS9</name>
<sequence length="87" mass="9570">MYVIELTLRMSPIPVSVQRKEPSDAEALYQEIRQAIDHGQPRLLDLTCEKVEGKKAALLISEVLAVQLYEKASAAGGSKRPGFSLES</sequence>
<dbReference type="EMBL" id="CP000097">
    <property type="protein sequence ID" value="ABB26910.1"/>
    <property type="molecule type" value="Genomic_DNA"/>
</dbReference>
<dbReference type="RefSeq" id="WP_011359146.1">
    <property type="nucleotide sequence ID" value="NC_007513.1"/>
</dbReference>
<dbReference type="STRING" id="316279.Syncc9902_1952a"/>
<dbReference type="KEGG" id="sye:Syncc9902_1952a"/>
<dbReference type="eggNOG" id="ENOG5032YB3">
    <property type="taxonomic scope" value="Bacteria"/>
</dbReference>
<dbReference type="HOGENOM" id="CLU_180777_0_0_3"/>
<dbReference type="OrthoDB" id="516864at2"/>
<dbReference type="Proteomes" id="UP000002712">
    <property type="component" value="Chromosome"/>
</dbReference>
<dbReference type="HAMAP" id="MF_01360">
    <property type="entry name" value="UPF0367"/>
    <property type="match status" value="1"/>
</dbReference>
<dbReference type="InterPro" id="IPR020885">
    <property type="entry name" value="UPF0367"/>
</dbReference>
<dbReference type="NCBIfam" id="NF010236">
    <property type="entry name" value="PRK13683.1"/>
    <property type="match status" value="1"/>
</dbReference>
<gene>
    <name type="ordered locus">Syncc9902_0316</name>
    <name type="ORF">Syncc9902_1952a</name>
</gene>
<protein>
    <recommendedName>
        <fullName evidence="1">UPF0367 protein Syncc9902_0316</fullName>
    </recommendedName>
</protein>
<accession>Q3B039</accession>